<evidence type="ECO:0000255" key="1"/>
<evidence type="ECO:0000269" key="2">
    <source>
    </source>
</evidence>
<evidence type="ECO:0000303" key="3">
    <source>
    </source>
</evidence>
<dbReference type="EMBL" id="AE004091">
    <property type="status" value="NOT_ANNOTATED_CDS"/>
    <property type="molecule type" value="Genomic_DNA"/>
</dbReference>
<dbReference type="SMR" id="P0DTB6"/>
<dbReference type="InParanoid" id="P0DTB6"/>
<dbReference type="Proteomes" id="UP000002438">
    <property type="component" value="Chromosome"/>
</dbReference>
<dbReference type="GO" id="GO:0016020">
    <property type="term" value="C:membrane"/>
    <property type="evidence" value="ECO:0007669"/>
    <property type="project" value="UniProtKB-SubCell"/>
</dbReference>
<reference key="1">
    <citation type="journal article" date="2000" name="Nature">
        <title>Complete genome sequence of Pseudomonas aeruginosa PAO1, an opportunistic pathogen.</title>
        <authorList>
            <person name="Stover C.K."/>
            <person name="Pham X.-Q.T."/>
            <person name="Erwin A.L."/>
            <person name="Mizoguchi S.D."/>
            <person name="Warrener P."/>
            <person name="Hickey M.J."/>
            <person name="Brinkman F.S.L."/>
            <person name="Hufnagle W.O."/>
            <person name="Kowalik D.J."/>
            <person name="Lagrou M."/>
            <person name="Garber R.L."/>
            <person name="Goltry L."/>
            <person name="Tolentino E."/>
            <person name="Westbrock-Wadman S."/>
            <person name="Yuan Y."/>
            <person name="Brody L.L."/>
            <person name="Coulter S.N."/>
            <person name="Folger K.R."/>
            <person name="Kas A."/>
            <person name="Larbig K."/>
            <person name="Lim R.M."/>
            <person name="Smith K.A."/>
            <person name="Spencer D.H."/>
            <person name="Wong G.K.-S."/>
            <person name="Wu Z."/>
            <person name="Paulsen I.T."/>
            <person name="Reizer J."/>
            <person name="Saier M.H. Jr."/>
            <person name="Hancock R.E.W."/>
            <person name="Lory S."/>
            <person name="Olson M.V."/>
        </authorList>
    </citation>
    <scope>NUCLEOTIDE SEQUENCE [LARGE SCALE GENOMIC DNA]</scope>
    <source>
        <strain>ATCC 15692 / DSM 22644 / CIP 104116 / JCM 14847 / LMG 12228 / 1C / PRS 101 / PAO1</strain>
    </source>
</reference>
<reference key="2">
    <citation type="journal article" date="2014" name="Mol. Microbiol.">
        <title>Genetically distinct pathways guide effector export through the type VI secretion system.</title>
        <authorList>
            <person name="Whitney J.C."/>
            <person name="Beck C.M."/>
            <person name="Goo Y.A."/>
            <person name="Russell A.B."/>
            <person name="Harding B.N."/>
            <person name="De Leon J.A."/>
            <person name="Cunningham D.A."/>
            <person name="Tran B.Q."/>
            <person name="Low D.A."/>
            <person name="Goodlett D.R."/>
            <person name="Hayes C.S."/>
            <person name="Mougous J.D."/>
        </authorList>
    </citation>
    <scope>FUNCTION</scope>
    <scope>DISRUPTION PHENOTYPE</scope>
</reference>
<keyword id="KW-0472">Membrane</keyword>
<keyword id="KW-1185">Reference proteome</keyword>
<keyword id="KW-0812">Transmembrane</keyword>
<keyword id="KW-1133">Transmembrane helix</keyword>
<gene>
    <name evidence="3" type="primary">tsi5</name>
    <name type="ordered locus">PA2683.1</name>
</gene>
<proteinExistence type="inferred from homology"/>
<organism>
    <name type="scientific">Pseudomonas aeruginosa (strain ATCC 15692 / DSM 22644 / CIP 104116 / JCM 14847 / LMG 12228 / 1C / PRS 101 / PAO1)</name>
    <dbReference type="NCBI Taxonomy" id="208964"/>
    <lineage>
        <taxon>Bacteria</taxon>
        <taxon>Pseudomonadati</taxon>
        <taxon>Pseudomonadota</taxon>
        <taxon>Gammaproteobacteria</taxon>
        <taxon>Pseudomonadales</taxon>
        <taxon>Pseudomonadaceae</taxon>
        <taxon>Pseudomonas</taxon>
    </lineage>
</organism>
<comment type="function">
    <text evidence="2">Immunity protein that plays a role in preventing early activation of toxin Tse5.</text>
</comment>
<comment type="subcellular location">
    <subcellularLocation>
        <location evidence="1">Membrane</location>
        <topology evidence="1">Multi-pass membrane protein</topology>
    </subcellularLocation>
</comment>
<comment type="disruption phenotype">
    <text evidence="2">Deletion mutant together with deletion of toxin Tse5 leads to a significant loss of fitness advantage when placed in competition with parental strains.</text>
</comment>
<name>TSI5_PSEAE</name>
<sequence length="76" mass="8759">MPTEGRRRGVSAAMIKHYLLMTLVCIPLALLYVCLEWFFGNTWVTVGVFFGVLVVLRLGLYLYRRSKGIRDGYLDE</sequence>
<accession>P0DTB6</accession>
<feature type="chain" id="PRO_0000449111" description="Immune protein Tsi5">
    <location>
        <begin position="1"/>
        <end position="76"/>
    </location>
</feature>
<feature type="transmembrane region" description="Helical" evidence="1">
    <location>
        <begin position="19"/>
        <end position="39"/>
    </location>
</feature>
<feature type="transmembrane region" description="Helical" evidence="1">
    <location>
        <begin position="43"/>
        <end position="63"/>
    </location>
</feature>
<protein>
    <recommendedName>
        <fullName evidence="3">Immune protein Tsi5</fullName>
    </recommendedName>
</protein>